<sequence>MPRKKTENFNFEASLNELTALVEKLEQGDLTLEESLQNFERGVGLVRSCQQALSDAEQKVKVLINQDGAETLVPFELETKTD</sequence>
<reference key="1">
    <citation type="journal article" date="2009" name="Infect. Immun.">
        <title>Comparative genomics reveal extensive transposon-mediated genomic plasticity and diversity among potential effector proteins within the genus Coxiella.</title>
        <authorList>
            <person name="Beare P.A."/>
            <person name="Unsworth N."/>
            <person name="Andoh M."/>
            <person name="Voth D.E."/>
            <person name="Omsland A."/>
            <person name="Gilk S.D."/>
            <person name="Williams K.P."/>
            <person name="Sobral B.W."/>
            <person name="Kupko J.J. III"/>
            <person name="Porcella S.F."/>
            <person name="Samuel J.E."/>
            <person name="Heinzen R.A."/>
        </authorList>
    </citation>
    <scope>NUCLEOTIDE SEQUENCE [LARGE SCALE GENOMIC DNA]</scope>
    <source>
        <strain>CbuG_Q212</strain>
    </source>
</reference>
<comment type="function">
    <text evidence="1">Bidirectionally degrades single-stranded DNA into large acid-insoluble oligonucleotides, which are then degraded further into small acid-soluble oligonucleotides.</text>
</comment>
<comment type="catalytic activity">
    <reaction evidence="1">
        <text>Exonucleolytic cleavage in either 5'- to 3'- or 3'- to 5'-direction to yield nucleoside 5'-phosphates.</text>
        <dbReference type="EC" id="3.1.11.6"/>
    </reaction>
</comment>
<comment type="subunit">
    <text evidence="1">Heterooligomer composed of large and small subunits.</text>
</comment>
<comment type="subcellular location">
    <subcellularLocation>
        <location evidence="1">Cytoplasm</location>
    </subcellularLocation>
</comment>
<comment type="similarity">
    <text evidence="1">Belongs to the XseB family.</text>
</comment>
<name>EX7S_COXB2</name>
<accession>B6J1L1</accession>
<keyword id="KW-0963">Cytoplasm</keyword>
<keyword id="KW-0269">Exonuclease</keyword>
<keyword id="KW-0378">Hydrolase</keyword>
<keyword id="KW-0540">Nuclease</keyword>
<gene>
    <name evidence="1" type="primary">xseB</name>
    <name type="ordered locus">CbuG_1545</name>
</gene>
<proteinExistence type="inferred from homology"/>
<feature type="chain" id="PRO_1000119918" description="Exodeoxyribonuclease 7 small subunit">
    <location>
        <begin position="1"/>
        <end position="82"/>
    </location>
</feature>
<organism>
    <name type="scientific">Coxiella burnetii (strain CbuG_Q212)</name>
    <name type="common">Coxiella burnetii (strain Q212)</name>
    <dbReference type="NCBI Taxonomy" id="434923"/>
    <lineage>
        <taxon>Bacteria</taxon>
        <taxon>Pseudomonadati</taxon>
        <taxon>Pseudomonadota</taxon>
        <taxon>Gammaproteobacteria</taxon>
        <taxon>Legionellales</taxon>
        <taxon>Coxiellaceae</taxon>
        <taxon>Coxiella</taxon>
    </lineage>
</organism>
<dbReference type="EC" id="3.1.11.6" evidence="1"/>
<dbReference type="EMBL" id="CP001019">
    <property type="protein sequence ID" value="ACJ18839.1"/>
    <property type="molecule type" value="Genomic_DNA"/>
</dbReference>
<dbReference type="RefSeq" id="WP_005771337.1">
    <property type="nucleotide sequence ID" value="NC_011527.1"/>
</dbReference>
<dbReference type="SMR" id="B6J1L1"/>
<dbReference type="KEGG" id="cbg:CbuG_1545"/>
<dbReference type="HOGENOM" id="CLU_145918_3_3_6"/>
<dbReference type="GO" id="GO:0005829">
    <property type="term" value="C:cytosol"/>
    <property type="evidence" value="ECO:0007669"/>
    <property type="project" value="TreeGrafter"/>
</dbReference>
<dbReference type="GO" id="GO:0009318">
    <property type="term" value="C:exodeoxyribonuclease VII complex"/>
    <property type="evidence" value="ECO:0007669"/>
    <property type="project" value="InterPro"/>
</dbReference>
<dbReference type="GO" id="GO:0008855">
    <property type="term" value="F:exodeoxyribonuclease VII activity"/>
    <property type="evidence" value="ECO:0007669"/>
    <property type="project" value="UniProtKB-UniRule"/>
</dbReference>
<dbReference type="GO" id="GO:0006308">
    <property type="term" value="P:DNA catabolic process"/>
    <property type="evidence" value="ECO:0007669"/>
    <property type="project" value="UniProtKB-UniRule"/>
</dbReference>
<dbReference type="Gene3D" id="1.10.287.1040">
    <property type="entry name" value="Exonuclease VII, small subunit"/>
    <property type="match status" value="1"/>
</dbReference>
<dbReference type="HAMAP" id="MF_00337">
    <property type="entry name" value="Exonuc_7_S"/>
    <property type="match status" value="1"/>
</dbReference>
<dbReference type="InterPro" id="IPR003761">
    <property type="entry name" value="Exonuc_VII_S"/>
</dbReference>
<dbReference type="InterPro" id="IPR037004">
    <property type="entry name" value="Exonuc_VII_ssu_sf"/>
</dbReference>
<dbReference type="NCBIfam" id="NF002140">
    <property type="entry name" value="PRK00977.1-4"/>
    <property type="match status" value="1"/>
</dbReference>
<dbReference type="NCBIfam" id="TIGR01280">
    <property type="entry name" value="xseB"/>
    <property type="match status" value="1"/>
</dbReference>
<dbReference type="PANTHER" id="PTHR34137">
    <property type="entry name" value="EXODEOXYRIBONUCLEASE 7 SMALL SUBUNIT"/>
    <property type="match status" value="1"/>
</dbReference>
<dbReference type="PANTHER" id="PTHR34137:SF1">
    <property type="entry name" value="EXODEOXYRIBONUCLEASE 7 SMALL SUBUNIT"/>
    <property type="match status" value="1"/>
</dbReference>
<dbReference type="Pfam" id="PF02609">
    <property type="entry name" value="Exonuc_VII_S"/>
    <property type="match status" value="1"/>
</dbReference>
<dbReference type="PIRSF" id="PIRSF006488">
    <property type="entry name" value="Exonuc_VII_S"/>
    <property type="match status" value="1"/>
</dbReference>
<dbReference type="SUPFAM" id="SSF116842">
    <property type="entry name" value="XseB-like"/>
    <property type="match status" value="1"/>
</dbReference>
<protein>
    <recommendedName>
        <fullName evidence="1">Exodeoxyribonuclease 7 small subunit</fullName>
        <ecNumber evidence="1">3.1.11.6</ecNumber>
    </recommendedName>
    <alternativeName>
        <fullName evidence="1">Exodeoxyribonuclease VII small subunit</fullName>
        <shortName evidence="1">Exonuclease VII small subunit</shortName>
    </alternativeName>
</protein>
<evidence type="ECO:0000255" key="1">
    <source>
        <dbReference type="HAMAP-Rule" id="MF_00337"/>
    </source>
</evidence>